<organism>
    <name type="scientific">Dictyostelium discoideum</name>
    <name type="common">Social amoeba</name>
    <dbReference type="NCBI Taxonomy" id="44689"/>
    <lineage>
        <taxon>Eukaryota</taxon>
        <taxon>Amoebozoa</taxon>
        <taxon>Evosea</taxon>
        <taxon>Eumycetozoa</taxon>
        <taxon>Dictyostelia</taxon>
        <taxon>Dictyosteliales</taxon>
        <taxon>Dictyosteliaceae</taxon>
        <taxon>Dictyostelium</taxon>
    </lineage>
</organism>
<accession>Q54E29</accession>
<dbReference type="EC" id="2.7.7.79" evidence="2"/>
<dbReference type="EMBL" id="AAFI02000185">
    <property type="protein sequence ID" value="EAL61536.1"/>
    <property type="molecule type" value="Genomic_DNA"/>
</dbReference>
<dbReference type="RefSeq" id="XP_629958.1">
    <property type="nucleotide sequence ID" value="XM_629956.1"/>
</dbReference>
<dbReference type="SMR" id="Q54E29"/>
<dbReference type="FunCoup" id="Q54E29">
    <property type="interactions" value="662"/>
</dbReference>
<dbReference type="STRING" id="44689.Q54E29"/>
<dbReference type="PaxDb" id="44689-DDB0233123"/>
<dbReference type="EnsemblProtists" id="EAL61536">
    <property type="protein sequence ID" value="EAL61536"/>
    <property type="gene ID" value="DDB_G0291830"/>
</dbReference>
<dbReference type="GeneID" id="8628364"/>
<dbReference type="KEGG" id="ddi:DDB_G0291830"/>
<dbReference type="dictyBase" id="DDB_G0291830">
    <property type="gene designation" value="thg1"/>
</dbReference>
<dbReference type="VEuPathDB" id="AmoebaDB:DDB_G0291830"/>
<dbReference type="eggNOG" id="KOG2721">
    <property type="taxonomic scope" value="Eukaryota"/>
</dbReference>
<dbReference type="HOGENOM" id="CLU_044271_0_1_1"/>
<dbReference type="InParanoid" id="Q54E29"/>
<dbReference type="OMA" id="WKQHTEI"/>
<dbReference type="PhylomeDB" id="Q54E29"/>
<dbReference type="BRENDA" id="2.7.7.79">
    <property type="organism ID" value="1939"/>
</dbReference>
<dbReference type="PRO" id="PR:Q54E29"/>
<dbReference type="Proteomes" id="UP000002195">
    <property type="component" value="Chromosome 6"/>
</dbReference>
<dbReference type="GO" id="GO:0005737">
    <property type="term" value="C:cytoplasm"/>
    <property type="evidence" value="ECO:0000314"/>
    <property type="project" value="dictyBase"/>
</dbReference>
<dbReference type="GO" id="GO:0005829">
    <property type="term" value="C:cytosol"/>
    <property type="evidence" value="ECO:0000314"/>
    <property type="project" value="dictyBase"/>
</dbReference>
<dbReference type="GO" id="GO:0097748">
    <property type="term" value="F:3'-5' RNA polymerase activity"/>
    <property type="evidence" value="ECO:0000314"/>
    <property type="project" value="dictyBase"/>
</dbReference>
<dbReference type="GO" id="GO:0005525">
    <property type="term" value="F:GTP binding"/>
    <property type="evidence" value="ECO:0007669"/>
    <property type="project" value="UniProtKB-KW"/>
</dbReference>
<dbReference type="GO" id="GO:0000287">
    <property type="term" value="F:magnesium ion binding"/>
    <property type="evidence" value="ECO:0007669"/>
    <property type="project" value="InterPro"/>
</dbReference>
<dbReference type="GO" id="GO:0008193">
    <property type="term" value="F:tRNA guanylyltransferase activity"/>
    <property type="evidence" value="ECO:0000314"/>
    <property type="project" value="dictyBase"/>
</dbReference>
<dbReference type="GO" id="GO:0099116">
    <property type="term" value="P:tRNA 5'-end processing"/>
    <property type="evidence" value="ECO:0000314"/>
    <property type="project" value="dictyBase"/>
</dbReference>
<dbReference type="GO" id="GO:0006400">
    <property type="term" value="P:tRNA modification"/>
    <property type="evidence" value="ECO:0007669"/>
    <property type="project" value="InterPro"/>
</dbReference>
<dbReference type="GO" id="GO:0008033">
    <property type="term" value="P:tRNA processing"/>
    <property type="evidence" value="ECO:0000250"/>
    <property type="project" value="UniProtKB"/>
</dbReference>
<dbReference type="FunFam" id="3.30.70.3000:FF:000003">
    <property type="entry name" value="tRNA(His) guanylyltransferase"/>
    <property type="match status" value="1"/>
</dbReference>
<dbReference type="Gene3D" id="3.30.70.3000">
    <property type="match status" value="1"/>
</dbReference>
<dbReference type="InterPro" id="IPR025845">
    <property type="entry name" value="Thg1_C_dom"/>
</dbReference>
<dbReference type="InterPro" id="IPR024956">
    <property type="entry name" value="tRNAHis_GuaTrfase_cat"/>
</dbReference>
<dbReference type="InterPro" id="IPR007537">
    <property type="entry name" value="tRNAHis_GuaTrfase_Thg1"/>
</dbReference>
<dbReference type="InterPro" id="IPR038469">
    <property type="entry name" value="tRNAHis_GuaTrfase_Thg1_sf"/>
</dbReference>
<dbReference type="PANTHER" id="PTHR12729">
    <property type="entry name" value="TRNA(HIS) GUANYLYLTRANSFERASE-RELATED"/>
    <property type="match status" value="1"/>
</dbReference>
<dbReference type="PANTHER" id="PTHR12729:SF6">
    <property type="entry name" value="TRNA(HIS) GUANYLYLTRANSFERASE-RELATED"/>
    <property type="match status" value="1"/>
</dbReference>
<dbReference type="Pfam" id="PF04446">
    <property type="entry name" value="Thg1"/>
    <property type="match status" value="1"/>
</dbReference>
<dbReference type="Pfam" id="PF14413">
    <property type="entry name" value="Thg1C"/>
    <property type="match status" value="1"/>
</dbReference>
<dbReference type="PIRSF" id="PIRSF028980">
    <property type="entry name" value="tRNAHis_guanylyltransferase"/>
    <property type="match status" value="1"/>
</dbReference>
<proteinExistence type="inferred from homology"/>
<keyword id="KW-0963">Cytoplasm</keyword>
<keyword id="KW-0342">GTP-binding</keyword>
<keyword id="KW-0460">Magnesium</keyword>
<keyword id="KW-0479">Metal-binding</keyword>
<keyword id="KW-0547">Nucleotide-binding</keyword>
<keyword id="KW-0548">Nucleotidyltransferase</keyword>
<keyword id="KW-1185">Reference proteome</keyword>
<keyword id="KW-0808">Transferase</keyword>
<keyword id="KW-0819">tRNA processing</keyword>
<feature type="chain" id="PRO_0000327762" description="Probable tRNA(His) guanylyltransferase">
    <location>
        <begin position="1"/>
        <end position="256"/>
    </location>
</feature>
<feature type="binding site" evidence="1">
    <location>
        <begin position="29"/>
        <end position="34"/>
    </location>
    <ligand>
        <name>GTP</name>
        <dbReference type="ChEBI" id="CHEBI:37565"/>
    </ligand>
</feature>
<feature type="binding site" evidence="1">
    <location>
        <position position="29"/>
    </location>
    <ligand>
        <name>Mg(2+)</name>
        <dbReference type="ChEBI" id="CHEBI:18420"/>
        <label>1</label>
        <note>catalytic</note>
    </ligand>
</feature>
<feature type="binding site" evidence="1">
    <location>
        <position position="29"/>
    </location>
    <ligand>
        <name>Mg(2+)</name>
        <dbReference type="ChEBI" id="CHEBI:18420"/>
        <label>2</label>
        <note>catalytic</note>
    </ligand>
</feature>
<feature type="binding site" evidence="1">
    <location>
        <position position="30"/>
    </location>
    <ligand>
        <name>Mg(2+)</name>
        <dbReference type="ChEBI" id="CHEBI:18420"/>
        <label>1</label>
        <note>catalytic</note>
    </ligand>
</feature>
<feature type="binding site" evidence="1">
    <location>
        <begin position="75"/>
        <end position="76"/>
    </location>
    <ligand>
        <name>GTP</name>
        <dbReference type="ChEBI" id="CHEBI:37565"/>
    </ligand>
</feature>
<feature type="binding site" evidence="1">
    <location>
        <position position="76"/>
    </location>
    <ligand>
        <name>Mg(2+)</name>
        <dbReference type="ChEBI" id="CHEBI:18420"/>
        <label>1</label>
        <note>catalytic</note>
    </ligand>
</feature>
<feature type="binding site" evidence="1">
    <location>
        <position position="76"/>
    </location>
    <ligand>
        <name>Mg(2+)</name>
        <dbReference type="ChEBI" id="CHEBI:18420"/>
        <label>2</label>
        <note>catalytic</note>
    </ligand>
</feature>
<comment type="function">
    <text evidence="2">Adds a GMP to the 5'-end of tRNA(His) after transcription and RNase P cleavage.</text>
</comment>
<comment type="catalytic activity">
    <reaction evidence="2">
        <text>a 5'-end ribonucleotide-tRNA(His) + GTP + ATP + H2O = a 5'-end phospho-guanosine-ribonucleotide-tRNA(His) + AMP + 2 diphosphate + H(+)</text>
        <dbReference type="Rhea" id="RHEA:54564"/>
        <dbReference type="Rhea" id="RHEA-COMP:14193"/>
        <dbReference type="Rhea" id="RHEA-COMP:14917"/>
        <dbReference type="ChEBI" id="CHEBI:15377"/>
        <dbReference type="ChEBI" id="CHEBI:15378"/>
        <dbReference type="ChEBI" id="CHEBI:30616"/>
        <dbReference type="ChEBI" id="CHEBI:33019"/>
        <dbReference type="ChEBI" id="CHEBI:37565"/>
        <dbReference type="ChEBI" id="CHEBI:138282"/>
        <dbReference type="ChEBI" id="CHEBI:141847"/>
        <dbReference type="ChEBI" id="CHEBI:456215"/>
        <dbReference type="EC" id="2.7.7.79"/>
    </reaction>
</comment>
<comment type="cofactor">
    <cofactor evidence="1">
        <name>Mg(2+)</name>
        <dbReference type="ChEBI" id="CHEBI:18420"/>
    </cofactor>
    <text evidence="1">Binds 2 magnesium ions per subunit.</text>
</comment>
<comment type="subcellular location">
    <subcellularLocation>
        <location evidence="1">Cytoplasm</location>
    </subcellularLocation>
</comment>
<comment type="similarity">
    <text evidence="3">Belongs to the tRNA(His) guanylyltransferase family.</text>
</comment>
<reference key="1">
    <citation type="journal article" date="2005" name="Nature">
        <title>The genome of the social amoeba Dictyostelium discoideum.</title>
        <authorList>
            <person name="Eichinger L."/>
            <person name="Pachebat J.A."/>
            <person name="Gloeckner G."/>
            <person name="Rajandream M.A."/>
            <person name="Sucgang R."/>
            <person name="Berriman M."/>
            <person name="Song J."/>
            <person name="Olsen R."/>
            <person name="Szafranski K."/>
            <person name="Xu Q."/>
            <person name="Tunggal B."/>
            <person name="Kummerfeld S."/>
            <person name="Madera M."/>
            <person name="Konfortov B.A."/>
            <person name="Rivero F."/>
            <person name="Bankier A.T."/>
            <person name="Lehmann R."/>
            <person name="Hamlin N."/>
            <person name="Davies R."/>
            <person name="Gaudet P."/>
            <person name="Fey P."/>
            <person name="Pilcher K."/>
            <person name="Chen G."/>
            <person name="Saunders D."/>
            <person name="Sodergren E.J."/>
            <person name="Davis P."/>
            <person name="Kerhornou A."/>
            <person name="Nie X."/>
            <person name="Hall N."/>
            <person name="Anjard C."/>
            <person name="Hemphill L."/>
            <person name="Bason N."/>
            <person name="Farbrother P."/>
            <person name="Desany B."/>
            <person name="Just E."/>
            <person name="Morio T."/>
            <person name="Rost R."/>
            <person name="Churcher C.M."/>
            <person name="Cooper J."/>
            <person name="Haydock S."/>
            <person name="van Driessche N."/>
            <person name="Cronin A."/>
            <person name="Goodhead I."/>
            <person name="Muzny D.M."/>
            <person name="Mourier T."/>
            <person name="Pain A."/>
            <person name="Lu M."/>
            <person name="Harper D."/>
            <person name="Lindsay R."/>
            <person name="Hauser H."/>
            <person name="James K.D."/>
            <person name="Quiles M."/>
            <person name="Madan Babu M."/>
            <person name="Saito T."/>
            <person name="Buchrieser C."/>
            <person name="Wardroper A."/>
            <person name="Felder M."/>
            <person name="Thangavelu M."/>
            <person name="Johnson D."/>
            <person name="Knights A."/>
            <person name="Loulseged H."/>
            <person name="Mungall K.L."/>
            <person name="Oliver K."/>
            <person name="Price C."/>
            <person name="Quail M.A."/>
            <person name="Urushihara H."/>
            <person name="Hernandez J."/>
            <person name="Rabbinowitsch E."/>
            <person name="Steffen D."/>
            <person name="Sanders M."/>
            <person name="Ma J."/>
            <person name="Kohara Y."/>
            <person name="Sharp S."/>
            <person name="Simmonds M.N."/>
            <person name="Spiegler S."/>
            <person name="Tivey A."/>
            <person name="Sugano S."/>
            <person name="White B."/>
            <person name="Walker D."/>
            <person name="Woodward J.R."/>
            <person name="Winckler T."/>
            <person name="Tanaka Y."/>
            <person name="Shaulsky G."/>
            <person name="Schleicher M."/>
            <person name="Weinstock G.M."/>
            <person name="Rosenthal A."/>
            <person name="Cox E.C."/>
            <person name="Chisholm R.L."/>
            <person name="Gibbs R.A."/>
            <person name="Loomis W.F."/>
            <person name="Platzer M."/>
            <person name="Kay R.R."/>
            <person name="Williams J.G."/>
            <person name="Dear P.H."/>
            <person name="Noegel A.A."/>
            <person name="Barrell B.G."/>
            <person name="Kuspa A."/>
        </authorList>
    </citation>
    <scope>NUCLEOTIDE SEQUENCE [LARGE SCALE GENOMIC DNA]</scope>
    <source>
        <strain>AX4</strain>
    </source>
</reference>
<name>THG1_DICDI</name>
<sequence>MANSKYEYVKSFEQPDILLQNVWIVVRIDGRSFHKFTTKHDYAKPNDDRGLSLMNRAALEVCKEFPDIVIAFGESDEYSFVLKKSCNLFERRSSKISSSIVSYFTSQFVYRWKEYFGEHELKYPPTFDSRCVLYPTDENIKDYLSWRQADTHINNLYNTCYWALVLKAGKTPIEAENELRGTFSDGKNEMLFSRFNINYNNLPAEYRKGSVIFKKPVQETNKETGLTKSKKRLVIEHVDIISEKFWKEYPDILASK</sequence>
<evidence type="ECO:0000250" key="1"/>
<evidence type="ECO:0000250" key="2">
    <source>
        <dbReference type="UniProtKB" id="Q9NWX6"/>
    </source>
</evidence>
<evidence type="ECO:0000305" key="3"/>
<protein>
    <recommendedName>
        <fullName>Probable tRNA(His) guanylyltransferase</fullName>
        <ecNumber evidence="2">2.7.7.79</ecNumber>
    </recommendedName>
    <alternativeName>
        <fullName>tRNA-histidine guanylyltransferase</fullName>
    </alternativeName>
</protein>
<gene>
    <name type="primary">thg1</name>
    <name type="ORF">DDB_G0291830</name>
</gene>